<keyword id="KW-0963">Cytoplasm</keyword>
<keyword id="KW-0489">Methyltransferase</keyword>
<keyword id="KW-1185">Reference proteome</keyword>
<keyword id="KW-0949">S-adenosyl-L-methionine</keyword>
<keyword id="KW-0808">Transferase</keyword>
<keyword id="KW-0819">tRNA processing</keyword>
<feature type="chain" id="PRO_0000313852" description="tRNA (cytidine/uridine-2'-O-)-methyltransferase TrmJ">
    <location>
        <begin position="1"/>
        <end position="245"/>
    </location>
</feature>
<feature type="binding site" evidence="1">
    <location>
        <begin position="79"/>
        <end position="81"/>
    </location>
    <ligand>
        <name>S-adenosyl-L-methionine</name>
        <dbReference type="ChEBI" id="CHEBI:59789"/>
    </ligand>
</feature>
<feature type="binding site" evidence="1">
    <location>
        <position position="114"/>
    </location>
    <ligand>
        <name>S-adenosyl-L-methionine</name>
        <dbReference type="ChEBI" id="CHEBI:59789"/>
    </ligand>
</feature>
<feature type="binding site" evidence="1">
    <location>
        <position position="134"/>
    </location>
    <ligand>
        <name>S-adenosyl-L-methionine</name>
        <dbReference type="ChEBI" id="CHEBI:59789"/>
    </ligand>
</feature>
<feature type="binding site" evidence="1">
    <location>
        <begin position="141"/>
        <end position="143"/>
    </location>
    <ligand>
        <name>S-adenosyl-L-methionine</name>
        <dbReference type="ChEBI" id="CHEBI:59789"/>
    </ligand>
</feature>
<name>TRMJ_CROS8</name>
<dbReference type="EC" id="2.1.1.200" evidence="1"/>
<dbReference type="EMBL" id="CP000783">
    <property type="protein sequence ID" value="ABU75996.1"/>
    <property type="molecule type" value="Genomic_DNA"/>
</dbReference>
<dbReference type="RefSeq" id="WP_007870043.1">
    <property type="nucleotide sequence ID" value="NC_009778.1"/>
</dbReference>
<dbReference type="SMR" id="A7MGX5"/>
<dbReference type="KEGG" id="esa:ESA_00719"/>
<dbReference type="HOGENOM" id="CLU_056931_0_1_6"/>
<dbReference type="Proteomes" id="UP000000260">
    <property type="component" value="Chromosome"/>
</dbReference>
<dbReference type="GO" id="GO:0005829">
    <property type="term" value="C:cytosol"/>
    <property type="evidence" value="ECO:0007669"/>
    <property type="project" value="TreeGrafter"/>
</dbReference>
<dbReference type="GO" id="GO:0003723">
    <property type="term" value="F:RNA binding"/>
    <property type="evidence" value="ECO:0007669"/>
    <property type="project" value="InterPro"/>
</dbReference>
<dbReference type="GO" id="GO:0160206">
    <property type="term" value="F:tRNA (cytidine(32)/uridine(32)-2'-O)-methyltransferase activity"/>
    <property type="evidence" value="ECO:0007669"/>
    <property type="project" value="UniProtKB-EC"/>
</dbReference>
<dbReference type="GO" id="GO:0002128">
    <property type="term" value="P:tRNA nucleoside ribose methylation"/>
    <property type="evidence" value="ECO:0007669"/>
    <property type="project" value="TreeGrafter"/>
</dbReference>
<dbReference type="CDD" id="cd18093">
    <property type="entry name" value="SpoU-like_TrmJ"/>
    <property type="match status" value="1"/>
</dbReference>
<dbReference type="FunFam" id="1.10.8.590:FF:000001">
    <property type="entry name" value="tRNA:Cm32/Um32 methyltransferase"/>
    <property type="match status" value="1"/>
</dbReference>
<dbReference type="FunFam" id="3.40.1280.10:FF:000006">
    <property type="entry name" value="Uncharacterized tRNA/rRNA methyltransferase HI_0380"/>
    <property type="match status" value="1"/>
</dbReference>
<dbReference type="Gene3D" id="1.10.8.590">
    <property type="match status" value="1"/>
</dbReference>
<dbReference type="Gene3D" id="3.40.1280.10">
    <property type="match status" value="1"/>
</dbReference>
<dbReference type="InterPro" id="IPR029028">
    <property type="entry name" value="Alpha/beta_knot_MTases"/>
</dbReference>
<dbReference type="InterPro" id="IPR004384">
    <property type="entry name" value="RNA_MeTrfase_TrmJ/LasT"/>
</dbReference>
<dbReference type="InterPro" id="IPR001537">
    <property type="entry name" value="SpoU_MeTrfase"/>
</dbReference>
<dbReference type="InterPro" id="IPR029026">
    <property type="entry name" value="tRNA_m1G_MTases_N"/>
</dbReference>
<dbReference type="NCBIfam" id="NF011694">
    <property type="entry name" value="PRK15114.1"/>
    <property type="match status" value="1"/>
</dbReference>
<dbReference type="NCBIfam" id="TIGR00050">
    <property type="entry name" value="rRNA_methyl_1"/>
    <property type="match status" value="1"/>
</dbReference>
<dbReference type="PANTHER" id="PTHR42786:SF2">
    <property type="entry name" value="TRNA (CYTIDINE_URIDINE-2'-O-)-METHYLTRANSFERASE TRMJ"/>
    <property type="match status" value="1"/>
</dbReference>
<dbReference type="PANTHER" id="PTHR42786">
    <property type="entry name" value="TRNA/RRNA METHYLTRANSFERASE"/>
    <property type="match status" value="1"/>
</dbReference>
<dbReference type="Pfam" id="PF00588">
    <property type="entry name" value="SpoU_methylase"/>
    <property type="match status" value="1"/>
</dbReference>
<dbReference type="PIRSF" id="PIRSF004808">
    <property type="entry name" value="LasT"/>
    <property type="match status" value="1"/>
</dbReference>
<dbReference type="SUPFAM" id="SSF75217">
    <property type="entry name" value="alpha/beta knot"/>
    <property type="match status" value="1"/>
</dbReference>
<gene>
    <name type="primary">trmJ</name>
    <name type="ordered locus">ESA_00719</name>
</gene>
<reference key="1">
    <citation type="journal article" date="2010" name="PLoS ONE">
        <title>Genome sequence of Cronobacter sakazakii BAA-894 and comparative genomic hybridization analysis with other Cronobacter species.</title>
        <authorList>
            <person name="Kucerova E."/>
            <person name="Clifton S.W."/>
            <person name="Xia X.Q."/>
            <person name="Long F."/>
            <person name="Porwollik S."/>
            <person name="Fulton L."/>
            <person name="Fronick C."/>
            <person name="Minx P."/>
            <person name="Kyung K."/>
            <person name="Warren W."/>
            <person name="Fulton R."/>
            <person name="Feng D."/>
            <person name="Wollam A."/>
            <person name="Shah N."/>
            <person name="Bhonagiri V."/>
            <person name="Nash W.E."/>
            <person name="Hallsworth-Pepin K."/>
            <person name="Wilson R.K."/>
            <person name="McClelland M."/>
            <person name="Forsythe S.J."/>
        </authorList>
    </citation>
    <scope>NUCLEOTIDE SEQUENCE [LARGE SCALE GENOMIC DNA]</scope>
    <source>
        <strain>ATCC BAA-894</strain>
    </source>
</reference>
<accession>A7MGX5</accession>
<evidence type="ECO:0000250" key="1">
    <source>
        <dbReference type="UniProtKB" id="P0AE01"/>
    </source>
</evidence>
<evidence type="ECO:0000305" key="2"/>
<comment type="function">
    <text evidence="1">Catalyzes the formation of 2'O-methylated cytidine (Cm32) or 2'O-methylated uridine (Um32) at position 32 in tRNA.</text>
</comment>
<comment type="catalytic activity">
    <reaction evidence="1">
        <text>cytidine(32) in tRNA + S-adenosyl-L-methionine = 2'-O-methylcytidine(32) in tRNA + S-adenosyl-L-homocysteine + H(+)</text>
        <dbReference type="Rhea" id="RHEA:42932"/>
        <dbReference type="Rhea" id="RHEA-COMP:10288"/>
        <dbReference type="Rhea" id="RHEA-COMP:10289"/>
        <dbReference type="ChEBI" id="CHEBI:15378"/>
        <dbReference type="ChEBI" id="CHEBI:57856"/>
        <dbReference type="ChEBI" id="CHEBI:59789"/>
        <dbReference type="ChEBI" id="CHEBI:74495"/>
        <dbReference type="ChEBI" id="CHEBI:82748"/>
        <dbReference type="EC" id="2.1.1.200"/>
    </reaction>
</comment>
<comment type="catalytic activity">
    <reaction evidence="1">
        <text>uridine(32) in tRNA + S-adenosyl-L-methionine = 2'-O-methyluridine(32) in tRNA + S-adenosyl-L-homocysteine + H(+)</text>
        <dbReference type="Rhea" id="RHEA:42936"/>
        <dbReference type="Rhea" id="RHEA-COMP:10107"/>
        <dbReference type="Rhea" id="RHEA-COMP:10290"/>
        <dbReference type="ChEBI" id="CHEBI:15378"/>
        <dbReference type="ChEBI" id="CHEBI:57856"/>
        <dbReference type="ChEBI" id="CHEBI:59789"/>
        <dbReference type="ChEBI" id="CHEBI:65315"/>
        <dbReference type="ChEBI" id="CHEBI:74478"/>
        <dbReference type="EC" id="2.1.1.200"/>
    </reaction>
</comment>
<comment type="subunit">
    <text evidence="1">Homodimer.</text>
</comment>
<comment type="subcellular location">
    <subcellularLocation>
        <location evidence="1">Cytoplasm</location>
    </subcellularLocation>
</comment>
<comment type="similarity">
    <text evidence="2">Belongs to the class IV-like SAM-binding methyltransferase superfamily. RNA methyltransferase TrmH family.</text>
</comment>
<protein>
    <recommendedName>
        <fullName evidence="1">tRNA (cytidine/uridine-2'-O-)-methyltransferase TrmJ</fullName>
        <ecNumber evidence="1">2.1.1.200</ecNumber>
    </recommendedName>
    <alternativeName>
        <fullName evidence="1">tRNA (cytidine(32)/uridine(32)-2'-O)-methyltransferase</fullName>
    </alternativeName>
    <alternativeName>
        <fullName evidence="1">tRNA Cm32/Um32 methyltransferase</fullName>
    </alternativeName>
</protein>
<proteinExistence type="inferred from homology"/>
<sequence>MLQNIRIVLVETSHTGNMGSVARAMKTMGLTNLWLVNPLVKPDSQAIALAAGASDVIGNASIVDTLDEALAGCSLVVGTSARSRTLPWPMLDPRECGLKSVSEATHAPVAIVFGRERVGLTNDELQKCHYHVAIAANPEYSSLNLAMAVQVIAYEVRMAWLASQDAQTPAPGEEETPYPLVDDLERFYGHLEQVLLSTGFIRPNHPGQVMNKLRRLFTRARPESQELNILRGMLASIESSRNEKP</sequence>
<organism>
    <name type="scientific">Cronobacter sakazakii (strain ATCC BAA-894)</name>
    <name type="common">Enterobacter sakazakii</name>
    <dbReference type="NCBI Taxonomy" id="290339"/>
    <lineage>
        <taxon>Bacteria</taxon>
        <taxon>Pseudomonadati</taxon>
        <taxon>Pseudomonadota</taxon>
        <taxon>Gammaproteobacteria</taxon>
        <taxon>Enterobacterales</taxon>
        <taxon>Enterobacteriaceae</taxon>
        <taxon>Cronobacter</taxon>
    </lineage>
</organism>